<proteinExistence type="evidence at transcript level"/>
<dbReference type="EMBL" id="BC142273">
    <property type="protein sequence ID" value="AAI42274.1"/>
    <property type="molecule type" value="mRNA"/>
</dbReference>
<dbReference type="RefSeq" id="NP_001092496.1">
    <property type="nucleotide sequence ID" value="NM_001099026.2"/>
</dbReference>
<dbReference type="FunCoup" id="A5PJX4">
    <property type="interactions" value="1864"/>
</dbReference>
<dbReference type="STRING" id="9913.ENSBTAP00000026341"/>
<dbReference type="PaxDb" id="9913-ENSBTAP00000026341"/>
<dbReference type="GeneID" id="523726"/>
<dbReference type="KEGG" id="bta:523726"/>
<dbReference type="CTD" id="54531"/>
<dbReference type="eggNOG" id="KOG4329">
    <property type="taxonomic scope" value="Eukaryota"/>
</dbReference>
<dbReference type="InParanoid" id="A5PJX4"/>
<dbReference type="OrthoDB" id="5916873at2759"/>
<dbReference type="Proteomes" id="UP000009136">
    <property type="component" value="Unplaced"/>
</dbReference>
<dbReference type="GO" id="GO:0005654">
    <property type="term" value="C:nucleoplasm"/>
    <property type="evidence" value="ECO:0000318"/>
    <property type="project" value="GO_Central"/>
</dbReference>
<dbReference type="GO" id="GO:0042826">
    <property type="term" value="F:histone deacetylase binding"/>
    <property type="evidence" value="ECO:0000318"/>
    <property type="project" value="GO_Central"/>
</dbReference>
<dbReference type="GO" id="GO:0003714">
    <property type="term" value="F:transcription corepressor activity"/>
    <property type="evidence" value="ECO:0000318"/>
    <property type="project" value="GO_Central"/>
</dbReference>
<dbReference type="GO" id="GO:0000122">
    <property type="term" value="P:negative regulation of transcription by RNA polymerase II"/>
    <property type="evidence" value="ECO:0000318"/>
    <property type="project" value="GO_Central"/>
</dbReference>
<dbReference type="CDD" id="cd11661">
    <property type="entry name" value="SANT_MTA3_like"/>
    <property type="match status" value="1"/>
</dbReference>
<dbReference type="FunFam" id="1.10.10.60:FF:000025">
    <property type="entry name" value="Mesoderm induction early response 1, transcriptional regulator"/>
    <property type="match status" value="1"/>
</dbReference>
<dbReference type="FunFam" id="4.10.1240.50:FF:000005">
    <property type="entry name" value="Mesoderm induction early response protein 3"/>
    <property type="match status" value="1"/>
</dbReference>
<dbReference type="Gene3D" id="4.10.1240.50">
    <property type="match status" value="1"/>
</dbReference>
<dbReference type="Gene3D" id="1.10.10.60">
    <property type="entry name" value="Homeodomain-like"/>
    <property type="match status" value="1"/>
</dbReference>
<dbReference type="InterPro" id="IPR000949">
    <property type="entry name" value="ELM2_dom"/>
</dbReference>
<dbReference type="InterPro" id="IPR009057">
    <property type="entry name" value="Homeodomain-like_sf"/>
</dbReference>
<dbReference type="InterPro" id="IPR040138">
    <property type="entry name" value="MIER/MTA"/>
</dbReference>
<dbReference type="InterPro" id="IPR001005">
    <property type="entry name" value="SANT/Myb"/>
</dbReference>
<dbReference type="InterPro" id="IPR017884">
    <property type="entry name" value="SANT_dom"/>
</dbReference>
<dbReference type="PANTHER" id="PTHR10865:SF27">
    <property type="entry name" value="MESODERM INDUCTION EARLY RESPONSE PROTEIN 2"/>
    <property type="match status" value="1"/>
</dbReference>
<dbReference type="PANTHER" id="PTHR10865">
    <property type="entry name" value="METASTASIS-ASSOCIATED PROTEIN AND MESODERM INDUCTION EARLY RESPONSE PROTEIN"/>
    <property type="match status" value="1"/>
</dbReference>
<dbReference type="Pfam" id="PF01448">
    <property type="entry name" value="ELM2"/>
    <property type="match status" value="1"/>
</dbReference>
<dbReference type="Pfam" id="PF00249">
    <property type="entry name" value="Myb_DNA-binding"/>
    <property type="match status" value="1"/>
</dbReference>
<dbReference type="SMART" id="SM01189">
    <property type="entry name" value="ELM2"/>
    <property type="match status" value="1"/>
</dbReference>
<dbReference type="SMART" id="SM00717">
    <property type="entry name" value="SANT"/>
    <property type="match status" value="1"/>
</dbReference>
<dbReference type="SUPFAM" id="SSF46689">
    <property type="entry name" value="Homeodomain-like"/>
    <property type="match status" value="1"/>
</dbReference>
<dbReference type="PROSITE" id="PS51156">
    <property type="entry name" value="ELM2"/>
    <property type="match status" value="1"/>
</dbReference>
<dbReference type="PROSITE" id="PS51293">
    <property type="entry name" value="SANT"/>
    <property type="match status" value="1"/>
</dbReference>
<feature type="chain" id="PRO_0000313677" description="Mesoderm induction early response protein 2">
    <location>
        <begin position="1"/>
        <end position="561"/>
    </location>
</feature>
<feature type="domain" description="ELM2" evidence="3">
    <location>
        <begin position="195"/>
        <end position="292"/>
    </location>
</feature>
<feature type="domain" description="SANT" evidence="4">
    <location>
        <begin position="297"/>
        <end position="349"/>
    </location>
</feature>
<feature type="region of interest" description="Disordered" evidence="5">
    <location>
        <begin position="1"/>
        <end position="28"/>
    </location>
</feature>
<feature type="region of interest" description="Disordered" evidence="5">
    <location>
        <begin position="52"/>
        <end position="188"/>
    </location>
</feature>
<feature type="region of interest" description="Disordered" evidence="5">
    <location>
        <begin position="360"/>
        <end position="515"/>
    </location>
</feature>
<feature type="compositionally biased region" description="Polar residues" evidence="5">
    <location>
        <begin position="140"/>
        <end position="165"/>
    </location>
</feature>
<feature type="compositionally biased region" description="Low complexity" evidence="5">
    <location>
        <begin position="417"/>
        <end position="428"/>
    </location>
</feature>
<feature type="compositionally biased region" description="Pro residues" evidence="5">
    <location>
        <begin position="439"/>
        <end position="451"/>
    </location>
</feature>
<feature type="compositionally biased region" description="Low complexity" evidence="5">
    <location>
        <begin position="453"/>
        <end position="482"/>
    </location>
</feature>
<feature type="modified residue" description="Phosphoserine" evidence="2">
    <location>
        <position position="11"/>
    </location>
</feature>
<gene>
    <name type="primary">MIER2</name>
</gene>
<comment type="function">
    <text evidence="1">Transcriptional repressor.</text>
</comment>
<comment type="subunit">
    <text evidence="1">Part of a complex containing at least CDYL, MIER1, MIER2, HDAC1 and HDAC2.</text>
</comment>
<comment type="subcellular location">
    <subcellularLocation>
        <location evidence="3 4">Nucleus</location>
    </subcellularLocation>
</comment>
<evidence type="ECO:0000250" key="1"/>
<evidence type="ECO:0000250" key="2">
    <source>
        <dbReference type="UniProtKB" id="Q8N344"/>
    </source>
</evidence>
<evidence type="ECO:0000255" key="3">
    <source>
        <dbReference type="PROSITE-ProRule" id="PRU00512"/>
    </source>
</evidence>
<evidence type="ECO:0000255" key="4">
    <source>
        <dbReference type="PROSITE-ProRule" id="PRU00624"/>
    </source>
</evidence>
<evidence type="ECO:0000256" key="5">
    <source>
        <dbReference type="SAM" id="MobiDB-lite"/>
    </source>
</evidence>
<protein>
    <recommendedName>
        <fullName>Mesoderm induction early response protein 2</fullName>
        <shortName>Mi-er2</shortName>
    </recommendedName>
</protein>
<accession>A5PJX4</accession>
<name>MIER2_BOVIN</name>
<reference key="1">
    <citation type="submission" date="2007-06" db="EMBL/GenBank/DDBJ databases">
        <authorList>
            <consortium name="NIH - Mammalian Gene Collection (MGC) project"/>
        </authorList>
    </citation>
    <scope>NUCLEOTIDE SEQUENCE [LARGE SCALE MRNA]</scope>
    <source>
        <strain>Hereford</strain>
        <tissue>Fetal liver</tissue>
    </source>
</reference>
<organism>
    <name type="scientific">Bos taurus</name>
    <name type="common">Bovine</name>
    <dbReference type="NCBI Taxonomy" id="9913"/>
    <lineage>
        <taxon>Eukaryota</taxon>
        <taxon>Metazoa</taxon>
        <taxon>Chordata</taxon>
        <taxon>Craniata</taxon>
        <taxon>Vertebrata</taxon>
        <taxon>Euteleostomi</taxon>
        <taxon>Mammalia</taxon>
        <taxon>Eutheria</taxon>
        <taxon>Laurasiatheria</taxon>
        <taxon>Artiodactyla</taxon>
        <taxon>Ruminantia</taxon>
        <taxon>Pecora</taxon>
        <taxon>Bovidae</taxon>
        <taxon>Bovinae</taxon>
        <taxon>Bos</taxon>
    </lineage>
</organism>
<keyword id="KW-0539">Nucleus</keyword>
<keyword id="KW-0597">Phosphoprotein</keyword>
<keyword id="KW-1185">Reference proteome</keyword>
<keyword id="KW-0678">Repressor</keyword>
<keyword id="KW-0804">Transcription</keyword>
<keyword id="KW-0805">Transcription regulation</keyword>
<sequence length="561" mass="61299">MAEASSLERQSPGAASCLPHSLCPGEPNLQTTAVVSMGSADHQFHLAEILSQNYGVREEHEGAAPGPEKPEEELEKDFVSQSSDMPLDELLALYGYETSDPISERESEGSDTAAHLPDMTLDKDQIAKDLLSGEEEEETQSSADDLTPSVTSHEASDLFPSQSGSCFLADADKEPGSSSSSDAEEDPLPANKCKKEIMVGPQFQADLSNLHSNRHGEKIYENEDQLLWDPNILPEREVEEFLYRAVKRRWHEMAGSQLPEGEAVKDSEQALYELVKCNFNAEEALRRLRFNVKVIRDGLCAWSEEERRNFEHGFRVHGKNFHLIQANKVRTRSVGECVEYYYLWKKSERYDYFSQQTRLGRRKYGPSGNTDADQDLEGSDPDGPGRPRSSPPLPLPAAAHGPGPEHDRLAQMHTEPLSMGSSMSRSLGEPGEALDVPPSSEPGPRLFPPLDEPSALPSSRRPPALAEPAFFPPATAAPEPGASPRLAVDLTLPEELPLVSSHEDTDGEPEETVGPPQVALSVAEFGLIGIGDVNPFLASHPACPASGLHSEPLSHCNVMTC</sequence>